<keyword id="KW-0687">Ribonucleoprotein</keyword>
<keyword id="KW-0689">Ribosomal protein</keyword>
<keyword id="KW-0694">RNA-binding</keyword>
<keyword id="KW-0699">rRNA-binding</keyword>
<keyword id="KW-0820">tRNA-binding</keyword>
<comment type="function">
    <text evidence="1">One of the primary rRNA binding proteins, it binds directly to 16S rRNA where it nucleates assembly of the head domain of the 30S subunit. Is located at the subunit interface close to the decoding center, probably blocks exit of the E-site tRNA.</text>
</comment>
<comment type="subunit">
    <text evidence="1">Part of the 30S ribosomal subunit. Contacts proteins S9 and S11.</text>
</comment>
<comment type="similarity">
    <text evidence="1">Belongs to the universal ribosomal protein uS7 family.</text>
</comment>
<protein>
    <recommendedName>
        <fullName evidence="1">Small ribosomal subunit protein uS7</fullName>
    </recommendedName>
    <alternativeName>
        <fullName evidence="2">30S ribosomal protein S7</fullName>
    </alternativeName>
</protein>
<dbReference type="EMBL" id="FM177140">
    <property type="protein sequence ID" value="CAQ67742.1"/>
    <property type="molecule type" value="Genomic_DNA"/>
</dbReference>
<dbReference type="SMR" id="B3WAM3"/>
<dbReference type="KEGG" id="lcb:LCABL_26760"/>
<dbReference type="HOGENOM" id="CLU_072226_1_1_9"/>
<dbReference type="GO" id="GO:0015935">
    <property type="term" value="C:small ribosomal subunit"/>
    <property type="evidence" value="ECO:0007669"/>
    <property type="project" value="InterPro"/>
</dbReference>
<dbReference type="GO" id="GO:0019843">
    <property type="term" value="F:rRNA binding"/>
    <property type="evidence" value="ECO:0007669"/>
    <property type="project" value="UniProtKB-UniRule"/>
</dbReference>
<dbReference type="GO" id="GO:0003735">
    <property type="term" value="F:structural constituent of ribosome"/>
    <property type="evidence" value="ECO:0007669"/>
    <property type="project" value="InterPro"/>
</dbReference>
<dbReference type="GO" id="GO:0000049">
    <property type="term" value="F:tRNA binding"/>
    <property type="evidence" value="ECO:0007669"/>
    <property type="project" value="UniProtKB-UniRule"/>
</dbReference>
<dbReference type="GO" id="GO:0006412">
    <property type="term" value="P:translation"/>
    <property type="evidence" value="ECO:0007669"/>
    <property type="project" value="UniProtKB-UniRule"/>
</dbReference>
<dbReference type="CDD" id="cd14869">
    <property type="entry name" value="uS7_Bacteria"/>
    <property type="match status" value="1"/>
</dbReference>
<dbReference type="FunFam" id="1.10.455.10:FF:000001">
    <property type="entry name" value="30S ribosomal protein S7"/>
    <property type="match status" value="1"/>
</dbReference>
<dbReference type="Gene3D" id="1.10.455.10">
    <property type="entry name" value="Ribosomal protein S7 domain"/>
    <property type="match status" value="1"/>
</dbReference>
<dbReference type="HAMAP" id="MF_00480_B">
    <property type="entry name" value="Ribosomal_uS7_B"/>
    <property type="match status" value="1"/>
</dbReference>
<dbReference type="InterPro" id="IPR000235">
    <property type="entry name" value="Ribosomal_uS7"/>
</dbReference>
<dbReference type="InterPro" id="IPR005717">
    <property type="entry name" value="Ribosomal_uS7_bac/org-type"/>
</dbReference>
<dbReference type="InterPro" id="IPR020606">
    <property type="entry name" value="Ribosomal_uS7_CS"/>
</dbReference>
<dbReference type="InterPro" id="IPR023798">
    <property type="entry name" value="Ribosomal_uS7_dom"/>
</dbReference>
<dbReference type="InterPro" id="IPR036823">
    <property type="entry name" value="Ribosomal_uS7_dom_sf"/>
</dbReference>
<dbReference type="NCBIfam" id="TIGR01029">
    <property type="entry name" value="rpsG_bact"/>
    <property type="match status" value="1"/>
</dbReference>
<dbReference type="PANTHER" id="PTHR11205">
    <property type="entry name" value="RIBOSOMAL PROTEIN S7"/>
    <property type="match status" value="1"/>
</dbReference>
<dbReference type="Pfam" id="PF00177">
    <property type="entry name" value="Ribosomal_S7"/>
    <property type="match status" value="1"/>
</dbReference>
<dbReference type="PIRSF" id="PIRSF002122">
    <property type="entry name" value="RPS7p_RPS7a_RPS5e_RPS7o"/>
    <property type="match status" value="1"/>
</dbReference>
<dbReference type="SUPFAM" id="SSF47973">
    <property type="entry name" value="Ribosomal protein S7"/>
    <property type="match status" value="1"/>
</dbReference>
<dbReference type="PROSITE" id="PS00052">
    <property type="entry name" value="RIBOSOMAL_S7"/>
    <property type="match status" value="1"/>
</dbReference>
<reference key="1">
    <citation type="submission" date="2008-06" db="EMBL/GenBank/DDBJ databases">
        <title>Lactobacillus casei BL23 complete genome sequence.</title>
        <authorList>
            <person name="Maze A."/>
            <person name="Boel G."/>
            <person name="Bourand A."/>
            <person name="Loux V."/>
            <person name="Gibrat J.F."/>
            <person name="Zuniga M."/>
            <person name="Hartke A."/>
            <person name="Deutscher J."/>
        </authorList>
    </citation>
    <scope>NUCLEOTIDE SEQUENCE [LARGE SCALE GENOMIC DNA]</scope>
    <source>
        <strain>BL23</strain>
    </source>
</reference>
<gene>
    <name evidence="1" type="primary">rpsG</name>
    <name type="ordered locus">LCABL_26760</name>
</gene>
<accession>B3WAM3</accession>
<feature type="chain" id="PRO_1000125959" description="Small ribosomal subunit protein uS7">
    <location>
        <begin position="1"/>
        <end position="156"/>
    </location>
</feature>
<evidence type="ECO:0000255" key="1">
    <source>
        <dbReference type="HAMAP-Rule" id="MF_00480"/>
    </source>
</evidence>
<evidence type="ECO:0000305" key="2"/>
<sequence>MPRKGSVAKRDVLPDPVYNSKLVTRLINHLMIDGKRGKASTILYDAFDMIKKQTGNEPLDVFEEAMKNVMPVLEVKARRIGGSNYQVPIEVRPDRRTTLGLRWIVQYSRQRGEHTMDERLAKEIMDAANNTGAAVKKREDTHKMADANRAFAHYRW</sequence>
<proteinExistence type="inferred from homology"/>
<name>RS7_LACCB</name>
<organism>
    <name type="scientific">Lacticaseibacillus casei (strain BL23)</name>
    <name type="common">Lactobacillus casei</name>
    <dbReference type="NCBI Taxonomy" id="543734"/>
    <lineage>
        <taxon>Bacteria</taxon>
        <taxon>Bacillati</taxon>
        <taxon>Bacillota</taxon>
        <taxon>Bacilli</taxon>
        <taxon>Lactobacillales</taxon>
        <taxon>Lactobacillaceae</taxon>
        <taxon>Lacticaseibacillus</taxon>
    </lineage>
</organism>